<gene>
    <name evidence="1" type="primary">atpA</name>
</gene>
<proteinExistence type="evidence at transcript level"/>
<feature type="chain" id="PRO_0000144367" description="ATP synthase subunit alpha, chloroplastic">
    <location>
        <begin position="1"/>
        <end position="507"/>
    </location>
</feature>
<feature type="binding site" evidence="1">
    <location>
        <begin position="170"/>
        <end position="177"/>
    </location>
    <ligand>
        <name>ATP</name>
        <dbReference type="ChEBI" id="CHEBI:30616"/>
    </ligand>
</feature>
<feature type="site" description="Required for activity" evidence="1">
    <location>
        <position position="364"/>
    </location>
</feature>
<reference key="1">
    <citation type="journal article" date="2003" name="DNA Res.">
        <title>Complete nucleotide sequence of the chloroplast genome from a leptosporangiate fern, Adiantum capillus-veneris L.</title>
        <authorList>
            <person name="Wolf P.G."/>
            <person name="Rowe C.A."/>
            <person name="Sinclair R.B."/>
            <person name="Hasebe M."/>
        </authorList>
    </citation>
    <scope>NUCLEOTIDE SEQUENCE [LARGE SCALE GENOMIC DNA]</scope>
</reference>
<reference key="2">
    <citation type="journal article" date="2004" name="Gene">
        <title>High levels of RNA editing in a vascular plant chloroplast genome: analysis of transcripts from the fern Adiantum capillus-veneris.</title>
        <authorList>
            <person name="Wolf P.G."/>
            <person name="Rowe C.A."/>
            <person name="Hasebe M."/>
        </authorList>
    </citation>
    <scope>NUCLEOTIDE SEQUENCE [GENOMIC DNA]</scope>
    <scope>RNA EDITING</scope>
    <source>
        <tissue>Frond</tissue>
    </source>
</reference>
<sequence length="507" mass="55033">MVINIQPDEIGSIIRKQIKGYVPEMKVVNIGTVLQVGDGIARIHGLDEVMAGELVEFEDGTVGIALNLESDNVGAVLMGDGLTIREGGSVRATGKIAQIPVSDSFLGRVVNALAQPIDGKGQIPASEFRLIESSAPGIISRRSVYEPLQTGLIAIDSMIPIGRGQRELIIGDRQTGKTAVATDTILNQKGQNVICVYVAIGQKASSVAQVVDTFRERGALEYTIVVSETANSPATLQYLAPYTGAALAEYFMYRKQHTLIIYDDLSKQAQAYRQMSLLLKRPPGREAYPGDVFYLHSRLLERAAKLSTQLGEGSMTALPIVETQAGDVSAYIPTNVISITDGQIFLSADLFNAGIRPAINVGISVSRVGSAAQIKAMKQVAGKLKLELAQFAELEAFAQFASDLDKTTQNQLARGQRLRELLKQSQSAPLAVEEQVATIYTGVNGYLDVLDVEQVKRFLVQLREYVATSKPSFGEIIRSTKVFTEQAEALLKEAIKESTELFLLQER</sequence>
<protein>
    <recommendedName>
        <fullName evidence="1">ATP synthase subunit alpha, chloroplastic</fullName>
        <ecNumber evidence="1">7.1.2.2</ecNumber>
    </recommendedName>
    <alternativeName>
        <fullName evidence="1">ATP synthase F1 sector subunit alpha</fullName>
    </alternativeName>
    <alternativeName>
        <fullName evidence="1">F-ATPase subunit alpha</fullName>
    </alternativeName>
</protein>
<keyword id="KW-0066">ATP synthesis</keyword>
<keyword id="KW-0067">ATP-binding</keyword>
<keyword id="KW-0139">CF(1)</keyword>
<keyword id="KW-0150">Chloroplast</keyword>
<keyword id="KW-0375">Hydrogen ion transport</keyword>
<keyword id="KW-0406">Ion transport</keyword>
<keyword id="KW-0472">Membrane</keyword>
<keyword id="KW-0547">Nucleotide-binding</keyword>
<keyword id="KW-0934">Plastid</keyword>
<keyword id="KW-0691">RNA editing</keyword>
<keyword id="KW-0793">Thylakoid</keyword>
<keyword id="KW-1278">Translocase</keyword>
<keyword id="KW-0813">Transport</keyword>
<organism>
    <name type="scientific">Adiantum capillus-veneris</name>
    <name type="common">Maidenhair fern</name>
    <dbReference type="NCBI Taxonomy" id="13818"/>
    <lineage>
        <taxon>Eukaryota</taxon>
        <taxon>Viridiplantae</taxon>
        <taxon>Streptophyta</taxon>
        <taxon>Embryophyta</taxon>
        <taxon>Tracheophyta</taxon>
        <taxon>Polypodiopsida</taxon>
        <taxon>Polypodiidae</taxon>
        <taxon>Polypodiales</taxon>
        <taxon>Pteridineae</taxon>
        <taxon>Pteridaceae</taxon>
        <taxon>Vittarioideae</taxon>
        <taxon>Adiantum</taxon>
    </lineage>
</organism>
<geneLocation type="chloroplast"/>
<name>ATPA_ADICA</name>
<accession>Q85FN4</accession>
<dbReference type="EC" id="7.1.2.2" evidence="1"/>
<dbReference type="EMBL" id="AY178864">
    <property type="protein sequence ID" value="AAP29377.2"/>
    <property type="molecule type" value="Genomic_DNA"/>
</dbReference>
<dbReference type="RefSeq" id="NP_848045.1">
    <property type="nucleotide sequence ID" value="NC_004766.1"/>
</dbReference>
<dbReference type="SMR" id="Q85FN4"/>
<dbReference type="GeneID" id="807426"/>
<dbReference type="GO" id="GO:0009535">
    <property type="term" value="C:chloroplast thylakoid membrane"/>
    <property type="evidence" value="ECO:0007669"/>
    <property type="project" value="UniProtKB-SubCell"/>
</dbReference>
<dbReference type="GO" id="GO:0045259">
    <property type="term" value="C:proton-transporting ATP synthase complex"/>
    <property type="evidence" value="ECO:0007669"/>
    <property type="project" value="UniProtKB-KW"/>
</dbReference>
<dbReference type="GO" id="GO:0043531">
    <property type="term" value="F:ADP binding"/>
    <property type="evidence" value="ECO:0007669"/>
    <property type="project" value="TreeGrafter"/>
</dbReference>
<dbReference type="GO" id="GO:0005524">
    <property type="term" value="F:ATP binding"/>
    <property type="evidence" value="ECO:0007669"/>
    <property type="project" value="UniProtKB-UniRule"/>
</dbReference>
<dbReference type="GO" id="GO:0046933">
    <property type="term" value="F:proton-transporting ATP synthase activity, rotational mechanism"/>
    <property type="evidence" value="ECO:0007669"/>
    <property type="project" value="UniProtKB-UniRule"/>
</dbReference>
<dbReference type="CDD" id="cd18113">
    <property type="entry name" value="ATP-synt_F1_alpha_C"/>
    <property type="match status" value="1"/>
</dbReference>
<dbReference type="CDD" id="cd18116">
    <property type="entry name" value="ATP-synt_F1_alpha_N"/>
    <property type="match status" value="1"/>
</dbReference>
<dbReference type="CDD" id="cd01132">
    <property type="entry name" value="F1-ATPase_alpha_CD"/>
    <property type="match status" value="1"/>
</dbReference>
<dbReference type="FunFam" id="1.20.150.20:FF:000001">
    <property type="entry name" value="ATP synthase subunit alpha"/>
    <property type="match status" value="1"/>
</dbReference>
<dbReference type="FunFam" id="2.40.30.20:FF:000001">
    <property type="entry name" value="ATP synthase subunit alpha"/>
    <property type="match status" value="1"/>
</dbReference>
<dbReference type="FunFam" id="3.40.50.300:FF:000002">
    <property type="entry name" value="ATP synthase subunit alpha"/>
    <property type="match status" value="1"/>
</dbReference>
<dbReference type="Gene3D" id="2.40.30.20">
    <property type="match status" value="1"/>
</dbReference>
<dbReference type="Gene3D" id="1.20.150.20">
    <property type="entry name" value="ATP synthase alpha/beta chain, C-terminal domain"/>
    <property type="match status" value="1"/>
</dbReference>
<dbReference type="Gene3D" id="3.40.50.300">
    <property type="entry name" value="P-loop containing nucleotide triphosphate hydrolases"/>
    <property type="match status" value="1"/>
</dbReference>
<dbReference type="HAMAP" id="MF_01346">
    <property type="entry name" value="ATP_synth_alpha_bact"/>
    <property type="match status" value="1"/>
</dbReference>
<dbReference type="InterPro" id="IPR023366">
    <property type="entry name" value="ATP_synth_asu-like_sf"/>
</dbReference>
<dbReference type="InterPro" id="IPR000793">
    <property type="entry name" value="ATP_synth_asu_C"/>
</dbReference>
<dbReference type="InterPro" id="IPR038376">
    <property type="entry name" value="ATP_synth_asu_C_sf"/>
</dbReference>
<dbReference type="InterPro" id="IPR033732">
    <property type="entry name" value="ATP_synth_F1_a_nt-bd_dom"/>
</dbReference>
<dbReference type="InterPro" id="IPR005294">
    <property type="entry name" value="ATP_synth_F1_asu"/>
</dbReference>
<dbReference type="InterPro" id="IPR020003">
    <property type="entry name" value="ATPase_a/bsu_AS"/>
</dbReference>
<dbReference type="InterPro" id="IPR004100">
    <property type="entry name" value="ATPase_F1/V1/A1_a/bsu_N"/>
</dbReference>
<dbReference type="InterPro" id="IPR036121">
    <property type="entry name" value="ATPase_F1/V1/A1_a/bsu_N_sf"/>
</dbReference>
<dbReference type="InterPro" id="IPR000194">
    <property type="entry name" value="ATPase_F1/V1/A1_a/bsu_nucl-bd"/>
</dbReference>
<dbReference type="InterPro" id="IPR027417">
    <property type="entry name" value="P-loop_NTPase"/>
</dbReference>
<dbReference type="NCBIfam" id="TIGR00962">
    <property type="entry name" value="atpA"/>
    <property type="match status" value="1"/>
</dbReference>
<dbReference type="NCBIfam" id="NF009884">
    <property type="entry name" value="PRK13343.1"/>
    <property type="match status" value="1"/>
</dbReference>
<dbReference type="PANTHER" id="PTHR48082">
    <property type="entry name" value="ATP SYNTHASE SUBUNIT ALPHA, MITOCHONDRIAL"/>
    <property type="match status" value="1"/>
</dbReference>
<dbReference type="PANTHER" id="PTHR48082:SF2">
    <property type="entry name" value="ATP SYNTHASE SUBUNIT ALPHA, MITOCHONDRIAL"/>
    <property type="match status" value="1"/>
</dbReference>
<dbReference type="Pfam" id="PF00006">
    <property type="entry name" value="ATP-synt_ab"/>
    <property type="match status" value="1"/>
</dbReference>
<dbReference type="Pfam" id="PF00306">
    <property type="entry name" value="ATP-synt_ab_C"/>
    <property type="match status" value="1"/>
</dbReference>
<dbReference type="Pfam" id="PF02874">
    <property type="entry name" value="ATP-synt_ab_N"/>
    <property type="match status" value="1"/>
</dbReference>
<dbReference type="PIRSF" id="PIRSF039088">
    <property type="entry name" value="F_ATPase_subunit_alpha"/>
    <property type="match status" value="1"/>
</dbReference>
<dbReference type="SUPFAM" id="SSF47917">
    <property type="entry name" value="C-terminal domain of alpha and beta subunits of F1 ATP synthase"/>
    <property type="match status" value="1"/>
</dbReference>
<dbReference type="SUPFAM" id="SSF50615">
    <property type="entry name" value="N-terminal domain of alpha and beta subunits of F1 ATP synthase"/>
    <property type="match status" value="1"/>
</dbReference>
<dbReference type="SUPFAM" id="SSF52540">
    <property type="entry name" value="P-loop containing nucleoside triphosphate hydrolases"/>
    <property type="match status" value="1"/>
</dbReference>
<dbReference type="PROSITE" id="PS00152">
    <property type="entry name" value="ATPASE_ALPHA_BETA"/>
    <property type="match status" value="1"/>
</dbReference>
<comment type="function">
    <text evidence="1">Produces ATP from ADP in the presence of a proton gradient across the membrane. The alpha chain is a regulatory subunit.</text>
</comment>
<comment type="catalytic activity">
    <reaction evidence="1">
        <text>ATP + H2O + 4 H(+)(in) = ADP + phosphate + 5 H(+)(out)</text>
        <dbReference type="Rhea" id="RHEA:57720"/>
        <dbReference type="ChEBI" id="CHEBI:15377"/>
        <dbReference type="ChEBI" id="CHEBI:15378"/>
        <dbReference type="ChEBI" id="CHEBI:30616"/>
        <dbReference type="ChEBI" id="CHEBI:43474"/>
        <dbReference type="ChEBI" id="CHEBI:456216"/>
        <dbReference type="EC" id="7.1.2.2"/>
    </reaction>
</comment>
<comment type="subunit">
    <text evidence="1">F-type ATPases have 2 components, CF(1) - the catalytic core - and CF(0) - the membrane proton channel. CF(1) has five subunits: alpha(3), beta(3), gamma(1), delta(1), epsilon(1). CF(0) has four main subunits: a, b, b' and c.</text>
</comment>
<comment type="subcellular location">
    <subcellularLocation>
        <location evidence="1">Plastid</location>
        <location evidence="1">Chloroplast thylakoid membrane</location>
        <topology evidence="1">Peripheral membrane protein</topology>
    </subcellularLocation>
</comment>
<comment type="RNA editing">
    <location>
        <position position="57" evidence="2"/>
    </location>
    <location>
        <position position="66" evidence="2"/>
    </location>
    <location>
        <position position="68" evidence="2"/>
    </location>
    <location>
        <position position="78" evidence="2"/>
    </location>
    <location>
        <position position="130" evidence="2"/>
    </location>
    <location>
        <position position="186" evidence="2"/>
    </location>
    <location>
        <position position="294" evidence="2"/>
    </location>
    <location>
        <position position="343" evidence="2"/>
    </location>
    <location>
        <position position="391" evidence="2"/>
    </location>
    <text>The nonsense codon at position 343 is modified to a sense codon.</text>
</comment>
<comment type="similarity">
    <text evidence="1">Belongs to the ATPase alpha/beta chains family.</text>
</comment>
<evidence type="ECO:0000255" key="1">
    <source>
        <dbReference type="HAMAP-Rule" id="MF_01346"/>
    </source>
</evidence>
<evidence type="ECO:0000269" key="2">
    <source>
    </source>
</evidence>